<organism>
    <name type="scientific">Arabidopsis thaliana</name>
    <name type="common">Mouse-ear cress</name>
    <dbReference type="NCBI Taxonomy" id="3702"/>
    <lineage>
        <taxon>Eukaryota</taxon>
        <taxon>Viridiplantae</taxon>
        <taxon>Streptophyta</taxon>
        <taxon>Embryophyta</taxon>
        <taxon>Tracheophyta</taxon>
        <taxon>Spermatophyta</taxon>
        <taxon>Magnoliopsida</taxon>
        <taxon>eudicotyledons</taxon>
        <taxon>Gunneridae</taxon>
        <taxon>Pentapetalae</taxon>
        <taxon>rosids</taxon>
        <taxon>malvids</taxon>
        <taxon>Brassicales</taxon>
        <taxon>Brassicaceae</taxon>
        <taxon>Camelineae</taxon>
        <taxon>Arabidopsis</taxon>
    </lineage>
</organism>
<dbReference type="EMBL" id="AC067754">
    <property type="protein sequence ID" value="AAG51801.1"/>
    <property type="molecule type" value="Genomic_DNA"/>
</dbReference>
<dbReference type="EMBL" id="CP002684">
    <property type="protein sequence ID" value="AEE35299.1"/>
    <property type="molecule type" value="Genomic_DNA"/>
</dbReference>
<dbReference type="EMBL" id="AY084376">
    <property type="protein sequence ID" value="AAM60956.1"/>
    <property type="molecule type" value="mRNA"/>
</dbReference>
<dbReference type="EMBL" id="BT025277">
    <property type="protein sequence ID" value="ABF19030.1"/>
    <property type="molecule type" value="mRNA"/>
</dbReference>
<dbReference type="PIR" id="F96746">
    <property type="entry name" value="F96746"/>
</dbReference>
<dbReference type="RefSeq" id="NP_177373.1">
    <property type="nucleotide sequence ID" value="NM_105888.2"/>
</dbReference>
<dbReference type="SMR" id="Q9C7S6"/>
<dbReference type="FunCoup" id="Q9C7S6">
    <property type="interactions" value="6"/>
</dbReference>
<dbReference type="STRING" id="3702.Q9C7S6"/>
<dbReference type="MEROPS" id="I03.028"/>
<dbReference type="GlyCosmos" id="Q9C7S6">
    <property type="glycosylation" value="1 site, No reported glycans"/>
</dbReference>
<dbReference type="GlyGen" id="Q9C7S6">
    <property type="glycosylation" value="1 site"/>
</dbReference>
<dbReference type="PaxDb" id="3702-AT1G72290.1"/>
<dbReference type="ProteomicsDB" id="243082"/>
<dbReference type="EnsemblPlants" id="AT1G72290.1">
    <property type="protein sequence ID" value="AT1G72290.1"/>
    <property type="gene ID" value="AT1G72290"/>
</dbReference>
<dbReference type="GeneID" id="843561"/>
<dbReference type="Gramene" id="AT1G72290.1">
    <property type="protein sequence ID" value="AT1G72290.1"/>
    <property type="gene ID" value="AT1G72290"/>
</dbReference>
<dbReference type="KEGG" id="ath:AT1G72290"/>
<dbReference type="Araport" id="AT1G72290"/>
<dbReference type="TAIR" id="AT1G72290">
    <property type="gene designation" value="ATWSCP"/>
</dbReference>
<dbReference type="HOGENOM" id="CLU_075927_0_0_1"/>
<dbReference type="InParanoid" id="Q9C7S6"/>
<dbReference type="OMA" id="PFVGTDY"/>
<dbReference type="OrthoDB" id="1028092at2759"/>
<dbReference type="PhylomeDB" id="Q9C7S6"/>
<dbReference type="PRO" id="PR:Q9C7S6"/>
<dbReference type="Proteomes" id="UP000006548">
    <property type="component" value="Chromosome 1"/>
</dbReference>
<dbReference type="ExpressionAtlas" id="Q9C7S6">
    <property type="expression patterns" value="baseline and differential"/>
</dbReference>
<dbReference type="GO" id="GO:0048046">
    <property type="term" value="C:apoplast"/>
    <property type="evidence" value="ECO:0000314"/>
    <property type="project" value="TAIR"/>
</dbReference>
<dbReference type="GO" id="GO:0005783">
    <property type="term" value="C:endoplasmic reticulum"/>
    <property type="evidence" value="ECO:0007669"/>
    <property type="project" value="UniProtKB-SubCell"/>
</dbReference>
<dbReference type="GO" id="GO:0004869">
    <property type="term" value="F:cysteine-type endopeptidase inhibitor activity"/>
    <property type="evidence" value="ECO:0000314"/>
    <property type="project" value="TAIR"/>
</dbReference>
<dbReference type="GO" id="GO:0030414">
    <property type="term" value="F:peptidase inhibitor activity"/>
    <property type="evidence" value="ECO:0000314"/>
    <property type="project" value="UniProtKB"/>
</dbReference>
<dbReference type="GO" id="GO:0006952">
    <property type="term" value="P:defense response"/>
    <property type="evidence" value="ECO:0007669"/>
    <property type="project" value="UniProtKB-KW"/>
</dbReference>
<dbReference type="GO" id="GO:0010623">
    <property type="term" value="P:programmed cell death involved in cell development"/>
    <property type="evidence" value="ECO:0000315"/>
    <property type="project" value="UniProtKB"/>
</dbReference>
<dbReference type="GO" id="GO:0080092">
    <property type="term" value="P:regulation of pollen tube growth"/>
    <property type="evidence" value="ECO:0000315"/>
    <property type="project" value="UniProtKB"/>
</dbReference>
<dbReference type="GO" id="GO:0080027">
    <property type="term" value="P:response to herbivore"/>
    <property type="evidence" value="ECO:0000315"/>
    <property type="project" value="TAIR"/>
</dbReference>
<dbReference type="GO" id="GO:0009625">
    <property type="term" value="P:response to insect"/>
    <property type="evidence" value="ECO:0000315"/>
    <property type="project" value="TAIR"/>
</dbReference>
<dbReference type="GO" id="GO:0009611">
    <property type="term" value="P:response to wounding"/>
    <property type="evidence" value="ECO:0000270"/>
    <property type="project" value="TAIR"/>
</dbReference>
<dbReference type="CDD" id="cd23360">
    <property type="entry name" value="beta-trefoil_STI_WSCP_II"/>
    <property type="match status" value="1"/>
</dbReference>
<dbReference type="FunFam" id="2.80.10.50:FF:000155">
    <property type="entry name" value="Cysteine protease inhibitor WSCP"/>
    <property type="match status" value="1"/>
</dbReference>
<dbReference type="Gene3D" id="2.80.10.50">
    <property type="match status" value="1"/>
</dbReference>
<dbReference type="InterPro" id="IPR011065">
    <property type="entry name" value="Kunitz_inhibitor_STI-like_sf"/>
</dbReference>
<dbReference type="InterPro" id="IPR002160">
    <property type="entry name" value="Prot_inh_Kunz-lg"/>
</dbReference>
<dbReference type="PANTHER" id="PTHR33107">
    <property type="entry name" value="KUNITZ TRYPSIN INHIBITOR 2"/>
    <property type="match status" value="1"/>
</dbReference>
<dbReference type="PANTHER" id="PTHR33107:SF89">
    <property type="entry name" value="KUNITZ TRYPSIN INHIBITOR 2"/>
    <property type="match status" value="1"/>
</dbReference>
<dbReference type="Pfam" id="PF00197">
    <property type="entry name" value="Kunitz_legume"/>
    <property type="match status" value="1"/>
</dbReference>
<dbReference type="SMART" id="SM00452">
    <property type="entry name" value="STI"/>
    <property type="match status" value="1"/>
</dbReference>
<dbReference type="SUPFAM" id="SSF50386">
    <property type="entry name" value="STI-like"/>
    <property type="match status" value="1"/>
</dbReference>
<proteinExistence type="evidence at protein level"/>
<comment type="function">
    <text evidence="4 5 6">Water-soluble and chlorophyll-binding protein that probably does not function as a chloroplast chlorophyll carrier and is not involved in photosynthesis (PubMed:11577184, PubMed:26160583). Involved in the control of cell death in the transmitting tract and septum epidermis during flower development. Binds and inhibits the activity of the cysteine protease RD21A as a pro-death protein (PubMed:26160583). May play a role in herbivore resistance activation during seedling greening (PubMed:26016527).</text>
</comment>
<comment type="subunit">
    <text evidence="5 6">Interacts with RD21A (PubMed:26016527, PubMed:26160583). Interacts with RD21B and RD21C (PubMed:26160583).</text>
</comment>
<comment type="subcellular location">
    <subcellularLocation>
        <location evidence="5 6">Secreted</location>
        <location evidence="5 6">Cell wall</location>
    </subcellularLocation>
    <subcellularLocation>
        <location evidence="5 6">Secreted</location>
        <location evidence="5 6">Extracellular space</location>
        <location evidence="5 6">Apoplast</location>
    </subcellularLocation>
    <subcellularLocation>
        <location evidence="7">Endoplasmic reticulum</location>
    </subcellularLocation>
    <text evidence="7">Targeted to ER bodies.</text>
</comment>
<comment type="tissue specificity">
    <text evidence="5 6">Expressed in vascular bundles of the carpels, the transmitting tract of the style and septum epidermis (PubMed:26160583). Expressed in etiolated seedlings (PubMed:26016527).</text>
</comment>
<comment type="developmental stage">
    <text evidence="6">During flower development, expressed in the transmitting tract of the septum from stage 12 to stage 15.</text>
</comment>
<comment type="disruption phenotype">
    <text evidence="5">No visible phenotype under normal growth conditions.</text>
</comment>
<comment type="similarity">
    <text evidence="10">Belongs to the protease inhibitor I3 (leguminous Kunitz-type inhibitor) family.</text>
</comment>
<accession>Q9C7S6</accession>
<keyword id="KW-0052">Apoplast</keyword>
<keyword id="KW-0134">Cell wall</keyword>
<keyword id="KW-1015">Disulfide bond</keyword>
<keyword id="KW-0256">Endoplasmic reticulum</keyword>
<keyword id="KW-0325">Glycoprotein</keyword>
<keyword id="KW-0611">Plant defense</keyword>
<keyword id="KW-0646">Protease inhibitor</keyword>
<keyword id="KW-1185">Reference proteome</keyword>
<keyword id="KW-0964">Secreted</keyword>
<keyword id="KW-0732">Signal</keyword>
<keyword id="KW-0789">Thiol protease inhibitor</keyword>
<reference key="1">
    <citation type="journal article" date="2000" name="Nature">
        <title>Sequence and analysis of chromosome 1 of the plant Arabidopsis thaliana.</title>
        <authorList>
            <person name="Theologis A."/>
            <person name="Ecker J.R."/>
            <person name="Palm C.J."/>
            <person name="Federspiel N.A."/>
            <person name="Kaul S."/>
            <person name="White O."/>
            <person name="Alonso J."/>
            <person name="Altafi H."/>
            <person name="Araujo R."/>
            <person name="Bowman C.L."/>
            <person name="Brooks S.Y."/>
            <person name="Buehler E."/>
            <person name="Chan A."/>
            <person name="Chao Q."/>
            <person name="Chen H."/>
            <person name="Cheuk R.F."/>
            <person name="Chin C.W."/>
            <person name="Chung M.K."/>
            <person name="Conn L."/>
            <person name="Conway A.B."/>
            <person name="Conway A.R."/>
            <person name="Creasy T.H."/>
            <person name="Dewar K."/>
            <person name="Dunn P."/>
            <person name="Etgu P."/>
            <person name="Feldblyum T.V."/>
            <person name="Feng J.-D."/>
            <person name="Fong B."/>
            <person name="Fujii C.Y."/>
            <person name="Gill J.E."/>
            <person name="Goldsmith A.D."/>
            <person name="Haas B."/>
            <person name="Hansen N.F."/>
            <person name="Hughes B."/>
            <person name="Huizar L."/>
            <person name="Hunter J.L."/>
            <person name="Jenkins J."/>
            <person name="Johnson-Hopson C."/>
            <person name="Khan S."/>
            <person name="Khaykin E."/>
            <person name="Kim C.J."/>
            <person name="Koo H.L."/>
            <person name="Kremenetskaia I."/>
            <person name="Kurtz D.B."/>
            <person name="Kwan A."/>
            <person name="Lam B."/>
            <person name="Langin-Hooper S."/>
            <person name="Lee A."/>
            <person name="Lee J.M."/>
            <person name="Lenz C.A."/>
            <person name="Li J.H."/>
            <person name="Li Y.-P."/>
            <person name="Lin X."/>
            <person name="Liu S.X."/>
            <person name="Liu Z.A."/>
            <person name="Luros J.S."/>
            <person name="Maiti R."/>
            <person name="Marziali A."/>
            <person name="Militscher J."/>
            <person name="Miranda M."/>
            <person name="Nguyen M."/>
            <person name="Nierman W.C."/>
            <person name="Osborne B.I."/>
            <person name="Pai G."/>
            <person name="Peterson J."/>
            <person name="Pham P.K."/>
            <person name="Rizzo M."/>
            <person name="Rooney T."/>
            <person name="Rowley D."/>
            <person name="Sakano H."/>
            <person name="Salzberg S.L."/>
            <person name="Schwartz J.R."/>
            <person name="Shinn P."/>
            <person name="Southwick A.M."/>
            <person name="Sun H."/>
            <person name="Tallon L.J."/>
            <person name="Tambunga G."/>
            <person name="Toriumi M.J."/>
            <person name="Town C.D."/>
            <person name="Utterback T."/>
            <person name="Van Aken S."/>
            <person name="Vaysberg M."/>
            <person name="Vysotskaia V.S."/>
            <person name="Walker M."/>
            <person name="Wu D."/>
            <person name="Yu G."/>
            <person name="Fraser C.M."/>
            <person name="Venter J.C."/>
            <person name="Davis R.W."/>
        </authorList>
    </citation>
    <scope>NUCLEOTIDE SEQUENCE [LARGE SCALE GENOMIC DNA]</scope>
    <source>
        <strain>cv. Columbia</strain>
    </source>
</reference>
<reference key="2">
    <citation type="journal article" date="2017" name="Plant J.">
        <title>Araport11: a complete reannotation of the Arabidopsis thaliana reference genome.</title>
        <authorList>
            <person name="Cheng C.Y."/>
            <person name="Krishnakumar V."/>
            <person name="Chan A.P."/>
            <person name="Thibaud-Nissen F."/>
            <person name="Schobel S."/>
            <person name="Town C.D."/>
        </authorList>
    </citation>
    <scope>GENOME REANNOTATION</scope>
    <source>
        <strain>cv. Columbia</strain>
    </source>
</reference>
<reference key="3">
    <citation type="submission" date="2006-04" db="EMBL/GenBank/DDBJ databases">
        <title>Arabidopsis ORF clones.</title>
        <authorList>
            <person name="Shinn P."/>
            <person name="Chen H."/>
            <person name="Kim C.J."/>
            <person name="Ecker J.R."/>
        </authorList>
    </citation>
    <scope>NUCLEOTIDE SEQUENCE [LARGE SCALE MRNA]</scope>
    <source>
        <strain>cv. Columbia</strain>
    </source>
</reference>
<reference key="4">
    <citation type="submission" date="2002-03" db="EMBL/GenBank/DDBJ databases">
        <title>Full-length cDNA from Arabidopsis thaliana.</title>
        <authorList>
            <person name="Brover V.V."/>
            <person name="Troukhan M.E."/>
            <person name="Alexandrov N.A."/>
            <person name="Lu Y.-P."/>
            <person name="Flavell R.B."/>
            <person name="Feldmann K.A."/>
        </authorList>
    </citation>
    <scope>NUCLEOTIDE SEQUENCE [LARGE SCALE MRNA]</scope>
</reference>
<reference key="5">
    <citation type="journal article" date="2001" name="Plant Cell Physiol.">
        <title>Water-soluble chlorophyll protein in Brassicaceae plants is a stress-induced chlorophyll-binding protein.</title>
        <authorList>
            <person name="Satoh H."/>
            <person name="Uchida A."/>
            <person name="Nakayama K."/>
            <person name="Okada M."/>
        </authorList>
    </citation>
    <scope>FUNCTION</scope>
</reference>
<reference key="6">
    <citation type="journal article" date="2015" name="BMC Res. Notes">
        <title>Water-soluble chlorophyll-binding proteins from Arabidopsis thaliana and Raphanus sativus target the endoplasmic reticulum body.</title>
        <authorList>
            <person name="Takahashi S."/>
            <person name="Aizawa K."/>
            <person name="Nakayama K."/>
            <person name="Satoh H."/>
        </authorList>
    </citation>
    <scope>SUBCELLULAR LOCATION</scope>
</reference>
<reference key="7">
    <citation type="journal article" date="2015" name="J. Exp. Bot.">
        <title>A Kunitz-type protease inhibitor regulates programmed cell death during flower development in Arabidopsis thaliana.</title>
        <authorList>
            <person name="Boex-Fontvieille E."/>
            <person name="Rustgi S."/>
            <person name="Reinbothe S."/>
            <person name="Reinbothe C."/>
        </authorList>
    </citation>
    <scope>FUNCTION</scope>
    <scope>INTERACTION WITH RD21A; RD21B AND RD21C</scope>
    <scope>SUBCELLULAR LOCATION</scope>
    <scope>TISSUE SPECIFICITY</scope>
    <scope>DEVELOPMENTAL STAGE</scope>
</reference>
<reference key="8">
    <citation type="journal article" date="2015" name="Proc. Natl. Acad. Sci. U.S.A.">
        <title>Water-soluble chlorophyll protein is involved in herbivore resistance activation during greening of Arabidopsis thaliana.</title>
        <authorList>
            <person name="Boex-Fontvieille E."/>
            <person name="Rustgi S."/>
            <person name="von Wettstein D."/>
            <person name="Reinbothe S."/>
            <person name="Reinbothe C."/>
        </authorList>
    </citation>
    <scope>FUNCTION</scope>
    <scope>INTERACTION WITH RD21A</scope>
    <scope>SUBCELLULAR LOCATION</scope>
    <scope>TISSUE SPECIFICITY</scope>
    <scope>DISRUPTION PHENOTYPE</scope>
</reference>
<reference key="9">
    <citation type="journal article" date="2018" name="Front. Plant Sci.">
        <title>Arabidopsis Kunitz trypsin inhibitors in defense against spider mites.</title>
        <authorList>
            <person name="Arnaiz A."/>
            <person name="Talavera-Mateo L."/>
            <person name="Gonzalez-Melendi P."/>
            <person name="Martinez M."/>
            <person name="Diaz I."/>
            <person name="Santamaria M.E."/>
        </authorList>
    </citation>
    <scope>GENE FAMILY</scope>
    <scope>NOMENCLATURE</scope>
</reference>
<name>KTI2_ARATH</name>
<feature type="signal peptide" evidence="2">
    <location>
        <begin position="1"/>
        <end position="23"/>
    </location>
</feature>
<feature type="chain" id="PRO_5006751521" description="Kunitz trypsin inhibitor 2">
    <location>
        <begin position="24"/>
        <end position="215"/>
    </location>
</feature>
<feature type="glycosylation site" description="N-linked (GlcNAc...) asparagine" evidence="3">
    <location>
        <position position="145"/>
    </location>
</feature>
<feature type="disulfide bond" evidence="1">
    <location>
        <begin position="67"/>
        <end position="114"/>
    </location>
</feature>
<sequence length="215" mass="23096">MKNPSVISFLIILLFAATICTHGNEPVKDTAGNPLNTREQYFIQPVKTESKNGGGLVPAAITVLPFCPLGITQTLLPYQPGLPVSFVLALGVGSTVMTSSAVNIEFKSNIWPFCKEFSKFWEVDDSSSAPKEPSILIGGKMGDRNSSFKIEKAGEGARANVYKLTTFYGTVGAIPGVWLSAPQLIITKDTAKTLLVKFKKVDDATTATSNLYFPG</sequence>
<evidence type="ECO:0000250" key="1">
    <source>
        <dbReference type="UniProtKB" id="P01070"/>
    </source>
</evidence>
<evidence type="ECO:0000255" key="2"/>
<evidence type="ECO:0000255" key="3">
    <source>
        <dbReference type="PROSITE-ProRule" id="PRU00498"/>
    </source>
</evidence>
<evidence type="ECO:0000269" key="4">
    <source>
    </source>
</evidence>
<evidence type="ECO:0000269" key="5">
    <source>
    </source>
</evidence>
<evidence type="ECO:0000269" key="6">
    <source>
    </source>
</evidence>
<evidence type="ECO:0000269" key="7">
    <source>
    </source>
</evidence>
<evidence type="ECO:0000303" key="8">
    <source>
    </source>
</evidence>
<evidence type="ECO:0000303" key="9">
    <source>
    </source>
</evidence>
<evidence type="ECO:0000305" key="10"/>
<evidence type="ECO:0000312" key="11">
    <source>
        <dbReference type="Araport" id="AT1G72290"/>
    </source>
</evidence>
<evidence type="ECO:0000312" key="12">
    <source>
        <dbReference type="EMBL" id="AAG51801.1"/>
    </source>
</evidence>
<protein>
    <recommendedName>
        <fullName evidence="9">Kunitz trypsin inhibitor 2</fullName>
        <shortName evidence="9">AtKTI2</shortName>
    </recommendedName>
    <alternativeName>
        <fullName evidence="10">Cysteine protease inhibitor WSCP</fullName>
    </alternativeName>
    <alternativeName>
        <fullName evidence="10">Kunitz-type cysteine protease inhibitor WSCP</fullName>
    </alternativeName>
    <alternativeName>
        <fullName evidence="8">Water-soluble chlorophyll protein</fullName>
        <shortName evidence="8">AtWSCP</shortName>
    </alternativeName>
</protein>
<gene>
    <name evidence="9" type="primary">KTI2</name>
    <name evidence="8" type="synonym">WSCP</name>
    <name evidence="11" type="ordered locus">At1g72290</name>
    <name evidence="12" type="ORF">T9N14.19</name>
</gene>